<dbReference type="EC" id="2.6.1.13" evidence="1"/>
<dbReference type="EMBL" id="BX571857">
    <property type="protein sequence ID" value="CAG41928.1"/>
    <property type="molecule type" value="Genomic_DNA"/>
</dbReference>
<dbReference type="SMR" id="Q6GCU1"/>
<dbReference type="KEGG" id="sas:SAS0160"/>
<dbReference type="HOGENOM" id="CLU_016922_10_1_9"/>
<dbReference type="UniPathway" id="UPA00098">
    <property type="reaction ID" value="UER00358"/>
</dbReference>
<dbReference type="GO" id="GO:0005737">
    <property type="term" value="C:cytoplasm"/>
    <property type="evidence" value="ECO:0007669"/>
    <property type="project" value="UniProtKB-SubCell"/>
</dbReference>
<dbReference type="GO" id="GO:0042802">
    <property type="term" value="F:identical protein binding"/>
    <property type="evidence" value="ECO:0007669"/>
    <property type="project" value="TreeGrafter"/>
</dbReference>
<dbReference type="GO" id="GO:0004587">
    <property type="term" value="F:ornithine aminotransferase activity"/>
    <property type="evidence" value="ECO:0007669"/>
    <property type="project" value="UniProtKB-UniRule"/>
</dbReference>
<dbReference type="GO" id="GO:0030170">
    <property type="term" value="F:pyridoxal phosphate binding"/>
    <property type="evidence" value="ECO:0007669"/>
    <property type="project" value="UniProtKB-UniRule"/>
</dbReference>
<dbReference type="GO" id="GO:0006525">
    <property type="term" value="P:arginine metabolic process"/>
    <property type="evidence" value="ECO:0007669"/>
    <property type="project" value="InterPro"/>
</dbReference>
<dbReference type="GO" id="GO:0055129">
    <property type="term" value="P:L-proline biosynthetic process"/>
    <property type="evidence" value="ECO:0007669"/>
    <property type="project" value="UniProtKB-UniRule"/>
</dbReference>
<dbReference type="CDD" id="cd00610">
    <property type="entry name" value="OAT_like"/>
    <property type="match status" value="1"/>
</dbReference>
<dbReference type="FunFam" id="3.40.640.10:FF:000011">
    <property type="entry name" value="Ornithine aminotransferase"/>
    <property type="match status" value="1"/>
</dbReference>
<dbReference type="Gene3D" id="3.90.1150.10">
    <property type="entry name" value="Aspartate Aminotransferase, domain 1"/>
    <property type="match status" value="1"/>
</dbReference>
<dbReference type="Gene3D" id="3.40.640.10">
    <property type="entry name" value="Type I PLP-dependent aspartate aminotransferase-like (Major domain)"/>
    <property type="match status" value="1"/>
</dbReference>
<dbReference type="HAMAP" id="MF_01689">
    <property type="entry name" value="Ornith_aminotrans_3"/>
    <property type="match status" value="1"/>
</dbReference>
<dbReference type="InterPro" id="IPR004636">
    <property type="entry name" value="AcOrn/SuccOrn_fam"/>
</dbReference>
<dbReference type="InterPro" id="IPR005814">
    <property type="entry name" value="Aminotrans_3"/>
</dbReference>
<dbReference type="InterPro" id="IPR049704">
    <property type="entry name" value="Aminotrans_3_PPA_site"/>
</dbReference>
<dbReference type="InterPro" id="IPR050103">
    <property type="entry name" value="Class-III_PLP-dep_AT"/>
</dbReference>
<dbReference type="InterPro" id="IPR010164">
    <property type="entry name" value="Orn_aminotrans"/>
</dbReference>
<dbReference type="InterPro" id="IPR034757">
    <property type="entry name" value="Ornith_aminotrans_bact"/>
</dbReference>
<dbReference type="InterPro" id="IPR015424">
    <property type="entry name" value="PyrdxlP-dep_Trfase"/>
</dbReference>
<dbReference type="InterPro" id="IPR015421">
    <property type="entry name" value="PyrdxlP-dep_Trfase_major"/>
</dbReference>
<dbReference type="InterPro" id="IPR015422">
    <property type="entry name" value="PyrdxlP-dep_Trfase_small"/>
</dbReference>
<dbReference type="NCBIfam" id="TIGR00707">
    <property type="entry name" value="argD"/>
    <property type="match status" value="1"/>
</dbReference>
<dbReference type="NCBIfam" id="TIGR01885">
    <property type="entry name" value="Orn_aminotrans"/>
    <property type="match status" value="1"/>
</dbReference>
<dbReference type="NCBIfam" id="NF002325">
    <property type="entry name" value="PRK01278.1"/>
    <property type="match status" value="1"/>
</dbReference>
<dbReference type="PANTHER" id="PTHR11986">
    <property type="entry name" value="AMINOTRANSFERASE CLASS III"/>
    <property type="match status" value="1"/>
</dbReference>
<dbReference type="PANTHER" id="PTHR11986:SF18">
    <property type="entry name" value="ORNITHINE AMINOTRANSFERASE, MITOCHONDRIAL"/>
    <property type="match status" value="1"/>
</dbReference>
<dbReference type="Pfam" id="PF00202">
    <property type="entry name" value="Aminotran_3"/>
    <property type="match status" value="1"/>
</dbReference>
<dbReference type="PIRSF" id="PIRSF000521">
    <property type="entry name" value="Transaminase_4ab_Lys_Orn"/>
    <property type="match status" value="1"/>
</dbReference>
<dbReference type="SUPFAM" id="SSF53383">
    <property type="entry name" value="PLP-dependent transferases"/>
    <property type="match status" value="1"/>
</dbReference>
<dbReference type="PROSITE" id="PS00600">
    <property type="entry name" value="AA_TRANSFER_CLASS_3"/>
    <property type="match status" value="1"/>
</dbReference>
<evidence type="ECO:0000255" key="1">
    <source>
        <dbReference type="HAMAP-Rule" id="MF_01689"/>
    </source>
</evidence>
<sequence length="394" mass="43049">MNSIIELTDYYSSNNYAPLKLVISKGKGVKVWDTDGKQYIDCISGFSVANQGHCHPTIVKAMTEQASKLSIISRVLYSDNLGKWEEKICHLAKKDKVLPLNSGTEAVEAAIKIARKWGSEVKGITDGQVEIIAMNNNFHGRTLGSLSLSNHDAYKAGFHPLLQGTTTVDFGDIEQLTQAISPNTAAIILEPIQGEGGVNIPPKGYIQAVRQLCDKHQILLIADEIQVGLGRTGKWFAMEWEQVVPDIYILGKALGGGLYPVSAVLANNDVMRVLTPGTHGSTFGGNPLAIAISTAALDVLKDEQLVERSERLGSFLLKALLQLKHPSIKEIRGRGLFIGIELNTDAAPFVDQLIQRGILCKDTHRTIIRLSPPLVIDKEEIHQIVAAFQDVFKN</sequence>
<comment type="function">
    <text evidence="1">Catalyzes the interconversion of ornithine to glutamate semialdehyde.</text>
</comment>
<comment type="catalytic activity">
    <reaction evidence="1">
        <text>a 2-oxocarboxylate + L-ornithine = L-glutamate 5-semialdehyde + an L-alpha-amino acid</text>
        <dbReference type="Rhea" id="RHEA:13877"/>
        <dbReference type="ChEBI" id="CHEBI:35179"/>
        <dbReference type="ChEBI" id="CHEBI:46911"/>
        <dbReference type="ChEBI" id="CHEBI:58066"/>
        <dbReference type="ChEBI" id="CHEBI:59869"/>
        <dbReference type="EC" id="2.6.1.13"/>
    </reaction>
</comment>
<comment type="cofactor">
    <cofactor evidence="1">
        <name>pyridoxal 5'-phosphate</name>
        <dbReference type="ChEBI" id="CHEBI:597326"/>
    </cofactor>
</comment>
<comment type="pathway">
    <text evidence="1">Amino-acid biosynthesis; L-proline biosynthesis; L-glutamate 5-semialdehyde from L-ornithine: step 1/1.</text>
</comment>
<comment type="subcellular location">
    <subcellularLocation>
        <location evidence="1">Cytoplasm</location>
    </subcellularLocation>
</comment>
<comment type="similarity">
    <text evidence="1">Belongs to the class-III pyridoxal-phosphate-dependent aminotransferase family. OAT subfamily.</text>
</comment>
<accession>Q6GCU1</accession>
<feature type="chain" id="PRO_0000112788" description="Ornithine aminotransferase 1">
    <location>
        <begin position="1"/>
        <end position="394"/>
    </location>
</feature>
<feature type="modified residue" description="N6-(pyridoxal phosphate)lysine" evidence="1">
    <location>
        <position position="252"/>
    </location>
</feature>
<proteinExistence type="inferred from homology"/>
<keyword id="KW-0028">Amino-acid biosynthesis</keyword>
<keyword id="KW-0032">Aminotransferase</keyword>
<keyword id="KW-0963">Cytoplasm</keyword>
<keyword id="KW-0641">Proline biosynthesis</keyword>
<keyword id="KW-0663">Pyridoxal phosphate</keyword>
<keyword id="KW-0808">Transferase</keyword>
<reference key="1">
    <citation type="journal article" date="2004" name="Proc. Natl. Acad. Sci. U.S.A.">
        <title>Complete genomes of two clinical Staphylococcus aureus strains: evidence for the rapid evolution of virulence and drug resistance.</title>
        <authorList>
            <person name="Holden M.T.G."/>
            <person name="Feil E.J."/>
            <person name="Lindsay J.A."/>
            <person name="Peacock S.J."/>
            <person name="Day N.P.J."/>
            <person name="Enright M.C."/>
            <person name="Foster T.J."/>
            <person name="Moore C.E."/>
            <person name="Hurst L."/>
            <person name="Atkin R."/>
            <person name="Barron A."/>
            <person name="Bason N."/>
            <person name="Bentley S.D."/>
            <person name="Chillingworth C."/>
            <person name="Chillingworth T."/>
            <person name="Churcher C."/>
            <person name="Clark L."/>
            <person name="Corton C."/>
            <person name="Cronin A."/>
            <person name="Doggett J."/>
            <person name="Dowd L."/>
            <person name="Feltwell T."/>
            <person name="Hance Z."/>
            <person name="Harris B."/>
            <person name="Hauser H."/>
            <person name="Holroyd S."/>
            <person name="Jagels K."/>
            <person name="James K.D."/>
            <person name="Lennard N."/>
            <person name="Line A."/>
            <person name="Mayes R."/>
            <person name="Moule S."/>
            <person name="Mungall K."/>
            <person name="Ormond D."/>
            <person name="Quail M.A."/>
            <person name="Rabbinowitsch E."/>
            <person name="Rutherford K.M."/>
            <person name="Sanders M."/>
            <person name="Sharp S."/>
            <person name="Simmonds M."/>
            <person name="Stevens K."/>
            <person name="Whitehead S."/>
            <person name="Barrell B.G."/>
            <person name="Spratt B.G."/>
            <person name="Parkhill J."/>
        </authorList>
    </citation>
    <scope>NUCLEOTIDE SEQUENCE [LARGE SCALE GENOMIC DNA]</scope>
    <source>
        <strain>MSSA476</strain>
    </source>
</reference>
<protein>
    <recommendedName>
        <fullName evidence="1">Ornithine aminotransferase 1</fullName>
        <shortName evidence="1">OAT 1</shortName>
        <ecNumber evidence="1">2.6.1.13</ecNumber>
    </recommendedName>
    <alternativeName>
        <fullName evidence="1">Ornithine--oxo-acid aminotransferase 1</fullName>
    </alternativeName>
</protein>
<gene>
    <name evidence="1" type="primary">rocD1</name>
    <name type="ordered locus">SAS0160</name>
</gene>
<organism>
    <name type="scientific">Staphylococcus aureus (strain MSSA476)</name>
    <dbReference type="NCBI Taxonomy" id="282459"/>
    <lineage>
        <taxon>Bacteria</taxon>
        <taxon>Bacillati</taxon>
        <taxon>Bacillota</taxon>
        <taxon>Bacilli</taxon>
        <taxon>Bacillales</taxon>
        <taxon>Staphylococcaceae</taxon>
        <taxon>Staphylococcus</taxon>
    </lineage>
</organism>
<name>OAT1_STAAS</name>